<dbReference type="EMBL" id="CP000141">
    <property type="protein sequence ID" value="ABB14325.1"/>
    <property type="molecule type" value="Genomic_DNA"/>
</dbReference>
<dbReference type="RefSeq" id="WP_011344432.1">
    <property type="nucleotide sequence ID" value="NC_007503.1"/>
</dbReference>
<dbReference type="SMR" id="Q3ABX7"/>
<dbReference type="FunCoup" id="Q3ABX7">
    <property type="interactions" value="381"/>
</dbReference>
<dbReference type="STRING" id="246194.CHY_1525"/>
<dbReference type="KEGG" id="chy:CHY_1525"/>
<dbReference type="eggNOG" id="COG0217">
    <property type="taxonomic scope" value="Bacteria"/>
</dbReference>
<dbReference type="HOGENOM" id="CLU_062974_2_2_9"/>
<dbReference type="InParanoid" id="Q3ABX7"/>
<dbReference type="OrthoDB" id="9781053at2"/>
<dbReference type="Proteomes" id="UP000002706">
    <property type="component" value="Chromosome"/>
</dbReference>
<dbReference type="GO" id="GO:0005829">
    <property type="term" value="C:cytosol"/>
    <property type="evidence" value="ECO:0007669"/>
    <property type="project" value="TreeGrafter"/>
</dbReference>
<dbReference type="GO" id="GO:0003677">
    <property type="term" value="F:DNA binding"/>
    <property type="evidence" value="ECO:0007669"/>
    <property type="project" value="UniProtKB-UniRule"/>
</dbReference>
<dbReference type="GO" id="GO:0006355">
    <property type="term" value="P:regulation of DNA-templated transcription"/>
    <property type="evidence" value="ECO:0007669"/>
    <property type="project" value="UniProtKB-UniRule"/>
</dbReference>
<dbReference type="FunFam" id="1.10.10.200:FF:000002">
    <property type="entry name" value="Probable transcriptional regulatory protein CLM62_37755"/>
    <property type="match status" value="1"/>
</dbReference>
<dbReference type="FunFam" id="3.30.70.980:FF:000002">
    <property type="entry name" value="Probable transcriptional regulatory protein YebC"/>
    <property type="match status" value="1"/>
</dbReference>
<dbReference type="Gene3D" id="1.10.10.200">
    <property type="match status" value="1"/>
</dbReference>
<dbReference type="Gene3D" id="3.30.70.980">
    <property type="match status" value="2"/>
</dbReference>
<dbReference type="HAMAP" id="MF_00693">
    <property type="entry name" value="Transcrip_reg_TACO1"/>
    <property type="match status" value="1"/>
</dbReference>
<dbReference type="InterPro" id="IPR017856">
    <property type="entry name" value="Integrase-like_N"/>
</dbReference>
<dbReference type="InterPro" id="IPR048300">
    <property type="entry name" value="TACO1_YebC-like_2nd/3rd_dom"/>
</dbReference>
<dbReference type="InterPro" id="IPR049083">
    <property type="entry name" value="TACO1_YebC_N"/>
</dbReference>
<dbReference type="InterPro" id="IPR002876">
    <property type="entry name" value="Transcrip_reg_TACO1-like"/>
</dbReference>
<dbReference type="InterPro" id="IPR026564">
    <property type="entry name" value="Transcrip_reg_TACO1-like_dom3"/>
</dbReference>
<dbReference type="InterPro" id="IPR029072">
    <property type="entry name" value="YebC-like"/>
</dbReference>
<dbReference type="NCBIfam" id="NF001030">
    <property type="entry name" value="PRK00110.1"/>
    <property type="match status" value="1"/>
</dbReference>
<dbReference type="NCBIfam" id="NF009044">
    <property type="entry name" value="PRK12378.1"/>
    <property type="match status" value="1"/>
</dbReference>
<dbReference type="NCBIfam" id="TIGR01033">
    <property type="entry name" value="YebC/PmpR family DNA-binding transcriptional regulator"/>
    <property type="match status" value="1"/>
</dbReference>
<dbReference type="PANTHER" id="PTHR12532:SF6">
    <property type="entry name" value="TRANSCRIPTIONAL REGULATORY PROTEIN YEBC-RELATED"/>
    <property type="match status" value="1"/>
</dbReference>
<dbReference type="PANTHER" id="PTHR12532">
    <property type="entry name" value="TRANSLATIONAL ACTIVATOR OF CYTOCHROME C OXIDASE 1"/>
    <property type="match status" value="1"/>
</dbReference>
<dbReference type="Pfam" id="PF20772">
    <property type="entry name" value="TACO1_YebC_N"/>
    <property type="match status" value="1"/>
</dbReference>
<dbReference type="Pfam" id="PF01709">
    <property type="entry name" value="Transcrip_reg"/>
    <property type="match status" value="1"/>
</dbReference>
<dbReference type="SUPFAM" id="SSF75625">
    <property type="entry name" value="YebC-like"/>
    <property type="match status" value="1"/>
</dbReference>
<reference key="1">
    <citation type="journal article" date="2005" name="PLoS Genet.">
        <title>Life in hot carbon monoxide: the complete genome sequence of Carboxydothermus hydrogenoformans Z-2901.</title>
        <authorList>
            <person name="Wu M."/>
            <person name="Ren Q."/>
            <person name="Durkin A.S."/>
            <person name="Daugherty S.C."/>
            <person name="Brinkac L.M."/>
            <person name="Dodson R.J."/>
            <person name="Madupu R."/>
            <person name="Sullivan S.A."/>
            <person name="Kolonay J.F."/>
            <person name="Nelson W.C."/>
            <person name="Tallon L.J."/>
            <person name="Jones K.M."/>
            <person name="Ulrich L.E."/>
            <person name="Gonzalez J.M."/>
            <person name="Zhulin I.B."/>
            <person name="Robb F.T."/>
            <person name="Eisen J.A."/>
        </authorList>
    </citation>
    <scope>NUCLEOTIDE SEQUENCE [LARGE SCALE GENOMIC DNA]</scope>
    <source>
        <strain>ATCC BAA-161 / DSM 6008 / Z-2901</strain>
    </source>
</reference>
<sequence length="244" mass="26965">MAGHSKWANIKHRKEKMDSLRGKVFTKLAREIMVAARLGGGDPEANPRLKAAIARAREANIPNENIQRAIMKGTGELAAESYEEVFYEGYGPGGVAILLKIMTDNRNRTAGEIRHLFSKHGGSMGEAGSVQWIFEEKGYITIPKEDNPGINEEEILLLVLDAGAEDLKDEGDQFEVITAPEAFEKVKDALNNANIKTSIAEITMLPKTTVPVSGEEAQKLLKLLDLFEEHDDVQEVYANFELVD</sequence>
<keyword id="KW-0963">Cytoplasm</keyword>
<keyword id="KW-0238">DNA-binding</keyword>
<keyword id="KW-1185">Reference proteome</keyword>
<keyword id="KW-0804">Transcription</keyword>
<keyword id="KW-0805">Transcription regulation</keyword>
<organism>
    <name type="scientific">Carboxydothermus hydrogenoformans (strain ATCC BAA-161 / DSM 6008 / Z-2901)</name>
    <dbReference type="NCBI Taxonomy" id="246194"/>
    <lineage>
        <taxon>Bacteria</taxon>
        <taxon>Bacillati</taxon>
        <taxon>Bacillota</taxon>
        <taxon>Clostridia</taxon>
        <taxon>Thermoanaerobacterales</taxon>
        <taxon>Thermoanaerobacteraceae</taxon>
        <taxon>Carboxydothermus</taxon>
    </lineage>
</organism>
<feature type="chain" id="PRO_0000257041" description="Probable transcriptional regulatory protein CHY_1525">
    <location>
        <begin position="1"/>
        <end position="244"/>
    </location>
</feature>
<comment type="subcellular location">
    <subcellularLocation>
        <location evidence="1">Cytoplasm</location>
    </subcellularLocation>
</comment>
<comment type="similarity">
    <text evidence="1">Belongs to the TACO1 family.</text>
</comment>
<proteinExistence type="inferred from homology"/>
<accession>Q3ABX7</accession>
<name>Y1525_CARHZ</name>
<evidence type="ECO:0000255" key="1">
    <source>
        <dbReference type="HAMAP-Rule" id="MF_00693"/>
    </source>
</evidence>
<protein>
    <recommendedName>
        <fullName evidence="1">Probable transcriptional regulatory protein CHY_1525</fullName>
    </recommendedName>
</protein>
<gene>
    <name type="ordered locus">CHY_1525</name>
</gene>